<comment type="function">
    <text>This protein promotes the GTP-dependent binding of aminoacyl-tRNA to the A-site of ribosomes during protein biosynthesis.</text>
</comment>
<comment type="subcellular location">
    <subcellularLocation>
        <location>Cytoplasm</location>
    </subcellularLocation>
</comment>
<comment type="similarity">
    <text evidence="3">Belongs to the TRAFAC class translation factor GTPase superfamily. Classic translation factor GTPase family. EF-Tu/EF-1A subfamily.</text>
</comment>
<keyword id="KW-0963">Cytoplasm</keyword>
<keyword id="KW-0251">Elongation factor</keyword>
<keyword id="KW-0342">GTP-binding</keyword>
<keyword id="KW-0488">Methylation</keyword>
<keyword id="KW-0547">Nucleotide-binding</keyword>
<keyword id="KW-0648">Protein biosynthesis</keyword>
<keyword id="KW-1185">Reference proteome</keyword>
<sequence length="458" mass="50012">MGKEKTHVNVVVIGHVDSGKSTTTGHLIYKCGGIDKRTIEKFEKEAAELGKGSFKYAWVLDKLKAERERGITIDIALWKFETPKYHVTVIDAPGHRDFIKNMITGTSQADCAILIIAGGTGEFEAGISKDGQTREHALLAYTLGVKQLIVAVNKMDSVKWDKNRFEEIIKETSNFVKKVGYNPKTVPFVPISGWNGDNMIEPSTNCPWYKGWEKETKSGKVTGKTLLEAIDAIEPPTRPTDKPLRLPLQDVYKIGGIGTVPVGRVETGIIKAGMVVTFAPAGVTTEVKSVEMHHEQLAEGVPGDNVGFNVKNVSVKEIRRGNVCGDSKNDPPKGCDSFNAQVIVLNHPGQISAGYSPVLDCHTAHIACKFDTLVEKIDRRTGKKLEENPKFVKSGDAAIVKMVPTKPMCVEAFTDYPPLGRFAVRDMRQTVAVGVIKSVEKSDKAGKVTKAAQKAAKK</sequence>
<gene>
    <name type="primary">TEF2</name>
    <name type="ordered locus">CAALFM_C108380WA</name>
    <name type="ORF">CaO19.382</name>
    <name type="ORF">CaO19.8012</name>
</gene>
<reference key="1">
    <citation type="journal article" date="1990" name="J. Bacteriol.">
        <title>Sequence analysis and expression of the two genes for elongation factor 1 alpha from the dimorphic yeast Candida albicans.</title>
        <authorList>
            <person name="Sundstrom P."/>
            <person name="Smith D."/>
            <person name="Sypherd P.S."/>
        </authorList>
    </citation>
    <scope>NUCLEOTIDE SEQUENCE [GENOMIC DNA]</scope>
    <source>
        <strain>SC5314 / ATCC MYA-2876</strain>
    </source>
</reference>
<reference key="2">
    <citation type="journal article" date="2004" name="Proc. Natl. Acad. Sci. U.S.A.">
        <title>The diploid genome sequence of Candida albicans.</title>
        <authorList>
            <person name="Jones T."/>
            <person name="Federspiel N.A."/>
            <person name="Chibana H."/>
            <person name="Dungan J."/>
            <person name="Kalman S."/>
            <person name="Magee B.B."/>
            <person name="Newport G."/>
            <person name="Thorstenson Y.R."/>
            <person name="Agabian N."/>
            <person name="Magee P.T."/>
            <person name="Davis R.W."/>
            <person name="Scherer S."/>
        </authorList>
    </citation>
    <scope>NUCLEOTIDE SEQUENCE [LARGE SCALE GENOMIC DNA]</scope>
    <source>
        <strain>SC5314 / ATCC MYA-2876</strain>
    </source>
</reference>
<reference key="3">
    <citation type="journal article" date="2007" name="Genome Biol.">
        <title>Assembly of the Candida albicans genome into sixteen supercontigs aligned on the eight chromosomes.</title>
        <authorList>
            <person name="van het Hoog M."/>
            <person name="Rast T.J."/>
            <person name="Martchenko M."/>
            <person name="Grindle S."/>
            <person name="Dignard D."/>
            <person name="Hogues H."/>
            <person name="Cuomo C."/>
            <person name="Berriman M."/>
            <person name="Scherer S."/>
            <person name="Magee B.B."/>
            <person name="Whiteway M."/>
            <person name="Chibana H."/>
            <person name="Nantel A."/>
            <person name="Magee P.T."/>
        </authorList>
    </citation>
    <scope>GENOME REANNOTATION</scope>
    <source>
        <strain>SC5314 / ATCC MYA-2876</strain>
    </source>
</reference>
<reference key="4">
    <citation type="journal article" date="2013" name="Genome Biol.">
        <title>Assembly of a phased diploid Candida albicans genome facilitates allele-specific measurements and provides a simple model for repeat and indel structure.</title>
        <authorList>
            <person name="Muzzey D."/>
            <person name="Schwartz K."/>
            <person name="Weissman J.S."/>
            <person name="Sherlock G."/>
        </authorList>
    </citation>
    <scope>NUCLEOTIDE SEQUENCE [LARGE SCALE GENOMIC DNA]</scope>
    <scope>GENOME REANNOTATION</scope>
    <source>
        <strain>SC5314 / ATCC MYA-2876</strain>
    </source>
</reference>
<protein>
    <recommendedName>
        <fullName>Elongation factor 1-alpha 2</fullName>
        <shortName>EF-1-alpha 2</shortName>
    </recommendedName>
</protein>
<feature type="initiator methionine" description="Removed" evidence="2">
    <location>
        <position position="1"/>
    </location>
</feature>
<feature type="chain" id="PRO_0000413176" description="Elongation factor 1-alpha 2">
    <location>
        <begin position="2"/>
        <end position="458"/>
    </location>
</feature>
<feature type="domain" description="tr-type G">
    <location>
        <begin position="5"/>
        <end position="240"/>
    </location>
</feature>
<feature type="region of interest" description="G1" evidence="1">
    <location>
        <begin position="14"/>
        <end position="21"/>
    </location>
</feature>
<feature type="region of interest" description="G2" evidence="1">
    <location>
        <begin position="70"/>
        <end position="74"/>
    </location>
</feature>
<feature type="region of interest" description="G3" evidence="1">
    <location>
        <begin position="91"/>
        <end position="94"/>
    </location>
</feature>
<feature type="region of interest" description="G4" evidence="1">
    <location>
        <begin position="153"/>
        <end position="156"/>
    </location>
</feature>
<feature type="region of interest" description="G5" evidence="1">
    <location>
        <begin position="192"/>
        <end position="194"/>
    </location>
</feature>
<feature type="binding site" evidence="1">
    <location>
        <begin position="14"/>
        <end position="21"/>
    </location>
    <ligand>
        <name>GTP</name>
        <dbReference type="ChEBI" id="CHEBI:37565"/>
    </ligand>
</feature>
<feature type="binding site" evidence="1">
    <location>
        <begin position="91"/>
        <end position="95"/>
    </location>
    <ligand>
        <name>GTP</name>
        <dbReference type="ChEBI" id="CHEBI:37565"/>
    </ligand>
</feature>
<feature type="binding site" evidence="1">
    <location>
        <begin position="153"/>
        <end position="156"/>
    </location>
    <ligand>
        <name>GTP</name>
        <dbReference type="ChEBI" id="CHEBI:37565"/>
    </ligand>
</feature>
<feature type="modified residue" description="N,N,N-trimethylglycine" evidence="2">
    <location>
        <position position="2"/>
    </location>
</feature>
<feature type="modified residue" description="N6,N6-dimethyllysine; alternate" evidence="2">
    <location>
        <position position="3"/>
    </location>
</feature>
<feature type="modified residue" description="N6-methyllysine; alternate" evidence="2">
    <location>
        <position position="3"/>
    </location>
</feature>
<feature type="modified residue" description="N6-methyllysine" evidence="2">
    <location>
        <position position="30"/>
    </location>
</feature>
<feature type="modified residue" description="N6,N6,N6-trimethyllysine" evidence="2">
    <location>
        <position position="79"/>
    </location>
</feature>
<feature type="modified residue" description="N6,N6-dimethyllysine; alternate" evidence="2">
    <location>
        <position position="316"/>
    </location>
</feature>
<feature type="modified residue" description="N6-methyllysine; alternate" evidence="2">
    <location>
        <position position="316"/>
    </location>
</feature>
<feature type="modified residue" description="N6-methyllysine" evidence="2">
    <location>
        <position position="390"/>
    </location>
</feature>
<accession>Q59QD6</accession>
<accession>A0A1D8PED0</accession>
<accession>P16017</accession>
<accession>Q5A743</accession>
<evidence type="ECO:0000250" key="1"/>
<evidence type="ECO:0000250" key="2">
    <source>
        <dbReference type="UniProtKB" id="P02994"/>
    </source>
</evidence>
<evidence type="ECO:0000305" key="3"/>
<name>EF1A2_CANAL</name>
<dbReference type="EMBL" id="M29935">
    <property type="protein sequence ID" value="AAA34340.1"/>
    <property type="molecule type" value="Genomic_DNA"/>
</dbReference>
<dbReference type="EMBL" id="CP017623">
    <property type="protein sequence ID" value="AOW26476.1"/>
    <property type="molecule type" value="Genomic_DNA"/>
</dbReference>
<dbReference type="RefSeq" id="XP_717655.2">
    <property type="nucleotide sequence ID" value="XM_712562.2"/>
</dbReference>
<dbReference type="SMR" id="Q59QD6"/>
<dbReference type="FunCoup" id="Q59QD6">
    <property type="interactions" value="1912"/>
</dbReference>
<dbReference type="STRING" id="237561.Q59QD6"/>
<dbReference type="EnsemblFungi" id="C2_08370C_A-T">
    <property type="protein sequence ID" value="C2_08370C_A-T-p1"/>
    <property type="gene ID" value="C2_08370C_A"/>
</dbReference>
<dbReference type="GeneID" id="3646502"/>
<dbReference type="KEGG" id="cal:CAALFM_C108380WA"/>
<dbReference type="KEGG" id="cal:CAALFM_C208370CA"/>
<dbReference type="CGD" id="CAL0000196936">
    <property type="gene designation" value="TEF1"/>
</dbReference>
<dbReference type="VEuPathDB" id="FungiDB:C2_08370C_A"/>
<dbReference type="HOGENOM" id="CLU_007265_3_5_1"/>
<dbReference type="InParanoid" id="Q59QD6"/>
<dbReference type="OMA" id="AIRDMGM"/>
<dbReference type="OrthoDB" id="3969558at2759"/>
<dbReference type="PRO" id="PR:Q59QD6"/>
<dbReference type="Proteomes" id="UP000000559">
    <property type="component" value="Chromosome 1"/>
</dbReference>
<dbReference type="GO" id="GO:0009986">
    <property type="term" value="C:cell surface"/>
    <property type="evidence" value="ECO:0000314"/>
    <property type="project" value="CGD"/>
</dbReference>
<dbReference type="GO" id="GO:0005737">
    <property type="term" value="C:cytoplasm"/>
    <property type="evidence" value="ECO:0007669"/>
    <property type="project" value="UniProtKB-SubCell"/>
</dbReference>
<dbReference type="GO" id="GO:0009277">
    <property type="term" value="C:fungal-type cell wall"/>
    <property type="evidence" value="ECO:0000314"/>
    <property type="project" value="CGD"/>
</dbReference>
<dbReference type="GO" id="GO:0030446">
    <property type="term" value="C:hyphal cell wall"/>
    <property type="evidence" value="ECO:0000314"/>
    <property type="project" value="CGD"/>
</dbReference>
<dbReference type="GO" id="GO:0030445">
    <property type="term" value="C:yeast-form cell wall"/>
    <property type="evidence" value="ECO:0000314"/>
    <property type="project" value="CGD"/>
</dbReference>
<dbReference type="GO" id="GO:0005525">
    <property type="term" value="F:GTP binding"/>
    <property type="evidence" value="ECO:0007669"/>
    <property type="project" value="UniProtKB-KW"/>
</dbReference>
<dbReference type="GO" id="GO:0003924">
    <property type="term" value="F:GTPase activity"/>
    <property type="evidence" value="ECO:0000318"/>
    <property type="project" value="GO_Central"/>
</dbReference>
<dbReference type="GO" id="GO:0003746">
    <property type="term" value="F:translation elongation factor activity"/>
    <property type="evidence" value="ECO:0000250"/>
    <property type="project" value="CGD"/>
</dbReference>
<dbReference type="GO" id="GO:0051701">
    <property type="term" value="P:biological process involved in interaction with host"/>
    <property type="evidence" value="ECO:0000353"/>
    <property type="project" value="CGD"/>
</dbReference>
<dbReference type="GO" id="GO:0006412">
    <property type="term" value="P:translation"/>
    <property type="evidence" value="ECO:0000318"/>
    <property type="project" value="GO_Central"/>
</dbReference>
<dbReference type="GO" id="GO:0006414">
    <property type="term" value="P:translational elongation"/>
    <property type="evidence" value="ECO:0000250"/>
    <property type="project" value="CGD"/>
</dbReference>
<dbReference type="CDD" id="cd01883">
    <property type="entry name" value="EF1_alpha"/>
    <property type="match status" value="1"/>
</dbReference>
<dbReference type="CDD" id="cd03693">
    <property type="entry name" value="EF1_alpha_II"/>
    <property type="match status" value="1"/>
</dbReference>
<dbReference type="CDD" id="cd03705">
    <property type="entry name" value="EF1_alpha_III"/>
    <property type="match status" value="1"/>
</dbReference>
<dbReference type="FunFam" id="2.40.30.10:FF:000003">
    <property type="entry name" value="Elongation factor 1-alpha"/>
    <property type="match status" value="1"/>
</dbReference>
<dbReference type="FunFam" id="2.40.30.10:FF:000005">
    <property type="entry name" value="Elongation factor 1-alpha"/>
    <property type="match status" value="1"/>
</dbReference>
<dbReference type="FunFam" id="3.40.50.300:FF:000211">
    <property type="entry name" value="Elongation factor 1-alpha"/>
    <property type="match status" value="1"/>
</dbReference>
<dbReference type="Gene3D" id="3.40.50.300">
    <property type="entry name" value="P-loop containing nucleotide triphosphate hydrolases"/>
    <property type="match status" value="1"/>
</dbReference>
<dbReference type="Gene3D" id="2.40.30.10">
    <property type="entry name" value="Translation factors"/>
    <property type="match status" value="2"/>
</dbReference>
<dbReference type="HAMAP" id="MF_00118_A">
    <property type="entry name" value="EF_Tu_A"/>
    <property type="match status" value="1"/>
</dbReference>
<dbReference type="InterPro" id="IPR004161">
    <property type="entry name" value="EFTu-like_2"/>
</dbReference>
<dbReference type="InterPro" id="IPR031157">
    <property type="entry name" value="G_TR_CS"/>
</dbReference>
<dbReference type="InterPro" id="IPR054696">
    <property type="entry name" value="GTP-eEF1A_C"/>
</dbReference>
<dbReference type="InterPro" id="IPR027417">
    <property type="entry name" value="P-loop_NTPase"/>
</dbReference>
<dbReference type="InterPro" id="IPR000795">
    <property type="entry name" value="T_Tr_GTP-bd_dom"/>
</dbReference>
<dbReference type="InterPro" id="IPR050100">
    <property type="entry name" value="TRAFAC_GTPase_members"/>
</dbReference>
<dbReference type="InterPro" id="IPR009000">
    <property type="entry name" value="Transl_B-barrel_sf"/>
</dbReference>
<dbReference type="InterPro" id="IPR009001">
    <property type="entry name" value="Transl_elong_EF1A/Init_IF2_C"/>
</dbReference>
<dbReference type="InterPro" id="IPR004539">
    <property type="entry name" value="Transl_elong_EF1A_euk/arc"/>
</dbReference>
<dbReference type="NCBIfam" id="TIGR00483">
    <property type="entry name" value="EF-1_alpha"/>
    <property type="match status" value="1"/>
</dbReference>
<dbReference type="NCBIfam" id="NF008969">
    <property type="entry name" value="PRK12317.1"/>
    <property type="match status" value="1"/>
</dbReference>
<dbReference type="PANTHER" id="PTHR23115">
    <property type="entry name" value="TRANSLATION FACTOR"/>
    <property type="match status" value="1"/>
</dbReference>
<dbReference type="Pfam" id="PF22594">
    <property type="entry name" value="GTP-eEF1A_C"/>
    <property type="match status" value="1"/>
</dbReference>
<dbReference type="Pfam" id="PF00009">
    <property type="entry name" value="GTP_EFTU"/>
    <property type="match status" value="1"/>
</dbReference>
<dbReference type="Pfam" id="PF03144">
    <property type="entry name" value="GTP_EFTU_D2"/>
    <property type="match status" value="1"/>
</dbReference>
<dbReference type="PRINTS" id="PR00315">
    <property type="entry name" value="ELONGATNFCT"/>
</dbReference>
<dbReference type="SUPFAM" id="SSF50465">
    <property type="entry name" value="EF-Tu/eEF-1alpha/eIF2-gamma C-terminal domain"/>
    <property type="match status" value="1"/>
</dbReference>
<dbReference type="SUPFAM" id="SSF52540">
    <property type="entry name" value="P-loop containing nucleoside triphosphate hydrolases"/>
    <property type="match status" value="1"/>
</dbReference>
<dbReference type="SUPFAM" id="SSF50447">
    <property type="entry name" value="Translation proteins"/>
    <property type="match status" value="1"/>
</dbReference>
<dbReference type="PROSITE" id="PS00301">
    <property type="entry name" value="G_TR_1"/>
    <property type="match status" value="1"/>
</dbReference>
<dbReference type="PROSITE" id="PS51722">
    <property type="entry name" value="G_TR_2"/>
    <property type="match status" value="1"/>
</dbReference>
<proteinExistence type="inferred from homology"/>
<organism>
    <name type="scientific">Candida albicans (strain SC5314 / ATCC MYA-2876)</name>
    <name type="common">Yeast</name>
    <dbReference type="NCBI Taxonomy" id="237561"/>
    <lineage>
        <taxon>Eukaryota</taxon>
        <taxon>Fungi</taxon>
        <taxon>Dikarya</taxon>
        <taxon>Ascomycota</taxon>
        <taxon>Saccharomycotina</taxon>
        <taxon>Pichiomycetes</taxon>
        <taxon>Debaryomycetaceae</taxon>
        <taxon>Candida/Lodderomyces clade</taxon>
        <taxon>Candida</taxon>
    </lineage>
</organism>